<dbReference type="EC" id="2.3.1.274" evidence="1"/>
<dbReference type="EMBL" id="AP008231">
    <property type="protein sequence ID" value="BAD78293.1"/>
    <property type="status" value="ALT_INIT"/>
    <property type="molecule type" value="Genomic_DNA"/>
</dbReference>
<dbReference type="RefSeq" id="WP_011242416.1">
    <property type="nucleotide sequence ID" value="NZ_CP085785.1"/>
</dbReference>
<dbReference type="SMR" id="Q5N5X4"/>
<dbReference type="GeneID" id="72430317"/>
<dbReference type="KEGG" id="syc:syc0103_c"/>
<dbReference type="eggNOG" id="COG0416">
    <property type="taxonomic scope" value="Bacteria"/>
</dbReference>
<dbReference type="UniPathway" id="UPA00085"/>
<dbReference type="Proteomes" id="UP000001175">
    <property type="component" value="Chromosome"/>
</dbReference>
<dbReference type="GO" id="GO:0005737">
    <property type="term" value="C:cytoplasm"/>
    <property type="evidence" value="ECO:0007669"/>
    <property type="project" value="UniProtKB-SubCell"/>
</dbReference>
<dbReference type="GO" id="GO:0043811">
    <property type="term" value="F:phosphate:acyl-[acyl carrier protein] acyltransferase activity"/>
    <property type="evidence" value="ECO:0007669"/>
    <property type="project" value="UniProtKB-UniRule"/>
</dbReference>
<dbReference type="GO" id="GO:0006633">
    <property type="term" value="P:fatty acid biosynthetic process"/>
    <property type="evidence" value="ECO:0007669"/>
    <property type="project" value="UniProtKB-UniRule"/>
</dbReference>
<dbReference type="GO" id="GO:0008654">
    <property type="term" value="P:phospholipid biosynthetic process"/>
    <property type="evidence" value="ECO:0007669"/>
    <property type="project" value="UniProtKB-KW"/>
</dbReference>
<dbReference type="Gene3D" id="3.40.718.10">
    <property type="entry name" value="Isopropylmalate Dehydrogenase"/>
    <property type="match status" value="1"/>
</dbReference>
<dbReference type="HAMAP" id="MF_00019">
    <property type="entry name" value="PlsX"/>
    <property type="match status" value="1"/>
</dbReference>
<dbReference type="InterPro" id="IPR003664">
    <property type="entry name" value="FA_synthesis"/>
</dbReference>
<dbReference type="InterPro" id="IPR012281">
    <property type="entry name" value="Phospholipid_synth_PlsX-like"/>
</dbReference>
<dbReference type="NCBIfam" id="TIGR00182">
    <property type="entry name" value="plsX"/>
    <property type="match status" value="1"/>
</dbReference>
<dbReference type="PANTHER" id="PTHR30100">
    <property type="entry name" value="FATTY ACID/PHOSPHOLIPID SYNTHESIS PROTEIN PLSX"/>
    <property type="match status" value="1"/>
</dbReference>
<dbReference type="PANTHER" id="PTHR30100:SF1">
    <property type="entry name" value="PHOSPHATE ACYLTRANSFERASE"/>
    <property type="match status" value="1"/>
</dbReference>
<dbReference type="Pfam" id="PF02504">
    <property type="entry name" value="FA_synthesis"/>
    <property type="match status" value="1"/>
</dbReference>
<dbReference type="PIRSF" id="PIRSF002465">
    <property type="entry name" value="Phsphlp_syn_PlsX"/>
    <property type="match status" value="1"/>
</dbReference>
<dbReference type="SUPFAM" id="SSF53659">
    <property type="entry name" value="Isocitrate/Isopropylmalate dehydrogenase-like"/>
    <property type="match status" value="1"/>
</dbReference>
<reference key="1">
    <citation type="journal article" date="2007" name="Photosyn. Res.">
        <title>Complete nucleotide sequence of the freshwater unicellular cyanobacterium Synechococcus elongatus PCC 6301 chromosome: gene content and organization.</title>
        <authorList>
            <person name="Sugita C."/>
            <person name="Ogata K."/>
            <person name="Shikata M."/>
            <person name="Jikuya H."/>
            <person name="Takano J."/>
            <person name="Furumichi M."/>
            <person name="Kanehisa M."/>
            <person name="Omata T."/>
            <person name="Sugiura M."/>
            <person name="Sugita M."/>
        </authorList>
    </citation>
    <scope>NUCLEOTIDE SEQUENCE [LARGE SCALE GENOMIC DNA]</scope>
    <source>
        <strain>ATCC 27144 / PCC 6301 / SAUG 1402/1</strain>
    </source>
</reference>
<evidence type="ECO:0000255" key="1">
    <source>
        <dbReference type="HAMAP-Rule" id="MF_00019"/>
    </source>
</evidence>
<evidence type="ECO:0000305" key="2"/>
<keyword id="KW-0963">Cytoplasm</keyword>
<keyword id="KW-0444">Lipid biosynthesis</keyword>
<keyword id="KW-0443">Lipid metabolism</keyword>
<keyword id="KW-0594">Phospholipid biosynthesis</keyword>
<keyword id="KW-1208">Phospholipid metabolism</keyword>
<keyword id="KW-0808">Transferase</keyword>
<feature type="chain" id="PRO_0000189954" description="Phosphate acyltransferase">
    <location>
        <begin position="1"/>
        <end position="346"/>
    </location>
</feature>
<organism>
    <name type="scientific">Synechococcus sp. (strain ATCC 27144 / PCC 6301 / SAUG 1402/1)</name>
    <name type="common">Anacystis nidulans</name>
    <dbReference type="NCBI Taxonomy" id="269084"/>
    <lineage>
        <taxon>Bacteria</taxon>
        <taxon>Bacillati</taxon>
        <taxon>Cyanobacteriota</taxon>
        <taxon>Cyanophyceae</taxon>
        <taxon>Synechococcales</taxon>
        <taxon>Synechococcaceae</taxon>
        <taxon>Synechococcus</taxon>
    </lineage>
</organism>
<sequence length="346" mass="36889">MTRARIAVDAMGGDFAPEEIVKGALRAQEELQADVILVGDPDRLRAICQDHAPHLQVRIEAAEEAIAMEDAAVSVRSRPRASINVAMDLVKAGEADAVISAGHSGAVMASALLRLGRIRGIDRPAIGALLPTVIPGKPVLVLDVGANVDCKPRFLEQFAVMGSIYSRDVLGQANPRVGLVNIGEEDSKGNELALASHQLLRNNPRICFVGNAEGRDVLSGQFDVVVCDGFVGNVLLKFAEAVGSVFLEIIRDELPRGMRGKVGSTLLRRNLRRIKQRLDHAEHGGALLLGVNGICIISHGSSKAPSIYSAIRLAVEAAENRVIDHLHQIQEPPSPAADLVTEPVVS</sequence>
<protein>
    <recommendedName>
        <fullName evidence="1">Phosphate acyltransferase</fullName>
        <ecNumber evidence="1">2.3.1.274</ecNumber>
    </recommendedName>
    <alternativeName>
        <fullName evidence="1">Acyl-ACP phosphotransacylase</fullName>
    </alternativeName>
    <alternativeName>
        <fullName evidence="1">Acyl-[acyl-carrier-protein]--phosphate acyltransferase</fullName>
    </alternativeName>
    <alternativeName>
        <fullName evidence="1">Phosphate-acyl-ACP acyltransferase</fullName>
    </alternativeName>
</protein>
<accession>Q5N5X4</accession>
<proteinExistence type="inferred from homology"/>
<name>PLSX_SYNP6</name>
<gene>
    <name evidence="1" type="primary">plsX</name>
    <name type="ordered locus">syc0103_c</name>
</gene>
<comment type="function">
    <text evidence="1">Catalyzes the reversible formation of acyl-phosphate (acyl-PO(4)) from acyl-[acyl-carrier-protein] (acyl-ACP). This enzyme utilizes acyl-ACP as fatty acyl donor, but not acyl-CoA.</text>
</comment>
<comment type="catalytic activity">
    <reaction evidence="1">
        <text>a fatty acyl-[ACP] + phosphate = an acyl phosphate + holo-[ACP]</text>
        <dbReference type="Rhea" id="RHEA:42292"/>
        <dbReference type="Rhea" id="RHEA-COMP:9685"/>
        <dbReference type="Rhea" id="RHEA-COMP:14125"/>
        <dbReference type="ChEBI" id="CHEBI:43474"/>
        <dbReference type="ChEBI" id="CHEBI:59918"/>
        <dbReference type="ChEBI" id="CHEBI:64479"/>
        <dbReference type="ChEBI" id="CHEBI:138651"/>
        <dbReference type="EC" id="2.3.1.274"/>
    </reaction>
</comment>
<comment type="pathway">
    <text evidence="1">Lipid metabolism; phospholipid metabolism.</text>
</comment>
<comment type="subunit">
    <text evidence="1">Homodimer. Probably interacts with PlsY.</text>
</comment>
<comment type="subcellular location">
    <subcellularLocation>
        <location evidence="1">Cytoplasm</location>
    </subcellularLocation>
    <text evidence="1">Associated with the membrane possibly through PlsY.</text>
</comment>
<comment type="similarity">
    <text evidence="1">Belongs to the PlsX family.</text>
</comment>
<comment type="sequence caution" evidence="2">
    <conflict type="erroneous initiation">
        <sequence resource="EMBL-CDS" id="BAD78293"/>
    </conflict>
</comment>